<dbReference type="EMBL" id="FN392235">
    <property type="protein sequence ID" value="CAY74791.1"/>
    <property type="status" value="ALT_INIT"/>
    <property type="molecule type" value="Genomic_DNA"/>
</dbReference>
<dbReference type="RefSeq" id="WP_012668519.1">
    <property type="nucleotide sequence ID" value="NC_017390.1"/>
</dbReference>
<dbReference type="SMR" id="D2TDA7"/>
<dbReference type="GeneID" id="92236609"/>
<dbReference type="KEGG" id="epr:EPYR_02411"/>
<dbReference type="PATRIC" id="fig|644651.3.peg.2200"/>
<dbReference type="HOGENOM" id="CLU_118972_2_0_6"/>
<dbReference type="OrthoDB" id="6464784at2"/>
<dbReference type="GO" id="GO:0000917">
    <property type="term" value="P:division septum assembly"/>
    <property type="evidence" value="ECO:0007669"/>
    <property type="project" value="UniProtKB-KW"/>
</dbReference>
<dbReference type="GO" id="GO:0006281">
    <property type="term" value="P:DNA repair"/>
    <property type="evidence" value="ECO:0007669"/>
    <property type="project" value="TreeGrafter"/>
</dbReference>
<dbReference type="GO" id="GO:0051782">
    <property type="term" value="P:negative regulation of cell division"/>
    <property type="evidence" value="ECO:0007669"/>
    <property type="project" value="UniProtKB-UniRule"/>
</dbReference>
<dbReference type="GO" id="GO:0009432">
    <property type="term" value="P:SOS response"/>
    <property type="evidence" value="ECO:0007669"/>
    <property type="project" value="UniProtKB-UniRule"/>
</dbReference>
<dbReference type="Gene3D" id="3.40.50.300">
    <property type="entry name" value="P-loop containing nucleotide triphosphate hydrolases"/>
    <property type="match status" value="1"/>
</dbReference>
<dbReference type="HAMAP" id="MF_01179">
    <property type="entry name" value="SulA"/>
    <property type="match status" value="1"/>
</dbReference>
<dbReference type="InterPro" id="IPR004596">
    <property type="entry name" value="Cell_div_suppressor_SulA"/>
</dbReference>
<dbReference type="InterPro" id="IPR027417">
    <property type="entry name" value="P-loop_NTPase"/>
</dbReference>
<dbReference type="InterPro" id="IPR050356">
    <property type="entry name" value="SulA_CellDiv_inhibitor"/>
</dbReference>
<dbReference type="InterPro" id="IPR047696">
    <property type="entry name" value="SulA_enterobact"/>
</dbReference>
<dbReference type="NCBIfam" id="NF007892">
    <property type="entry name" value="PRK10595.1"/>
    <property type="match status" value="1"/>
</dbReference>
<dbReference type="NCBIfam" id="TIGR00623">
    <property type="entry name" value="SOS_SulA_coli"/>
    <property type="match status" value="1"/>
</dbReference>
<dbReference type="PANTHER" id="PTHR35369">
    <property type="entry name" value="BLR3025 PROTEIN-RELATED"/>
    <property type="match status" value="1"/>
</dbReference>
<dbReference type="PANTHER" id="PTHR35369:SF4">
    <property type="entry name" value="CELL DIVISION INHIBITOR SULA"/>
    <property type="match status" value="1"/>
</dbReference>
<dbReference type="Pfam" id="PF03846">
    <property type="entry name" value="SulA"/>
    <property type="match status" value="1"/>
</dbReference>
<dbReference type="PIRSF" id="PIRSF003093">
    <property type="entry name" value="SulA"/>
    <property type="match status" value="1"/>
</dbReference>
<dbReference type="SUPFAM" id="SSF52540">
    <property type="entry name" value="P-loop containing nucleoside triphosphate hydrolases"/>
    <property type="match status" value="1"/>
</dbReference>
<name>SULA_ERWP6</name>
<feature type="chain" id="PRO_0000414246" description="Cell division inhibitor SulA">
    <location>
        <begin position="1"/>
        <end position="168"/>
    </location>
</feature>
<feature type="region of interest" description="FtsZ binding" evidence="1">
    <location>
        <begin position="105"/>
        <end position="111"/>
    </location>
</feature>
<feature type="site" description="Essential for degradation by Lon protease" evidence="1">
    <location>
        <position position="168"/>
    </location>
</feature>
<accession>D2TDA7</accession>
<proteinExistence type="inferred from homology"/>
<comment type="function">
    <text evidence="1">Component of the SOS system and an inhibitor of cell division. Accumulation of SulA causes rapid cessation of cell division and the appearance of long, non-septate filaments. In the presence of GTP, binds a polymerization-competent form of FtsZ in a 1:1 ratio, thus inhibiting FtsZ polymerization and therefore preventing it from participating in the assembly of the Z ring. This mechanism prevents the premature segregation of damaged DNA to daughter cells during cell division.</text>
</comment>
<comment type="subunit">
    <text evidence="1">Interacts with FtsZ.</text>
</comment>
<comment type="induction">
    <text evidence="1">By DNA damage, as part of the SOS response.</text>
</comment>
<comment type="PTM">
    <text evidence="1">Is rapidly cleaved and degraded by the Lon protease once DNA damage is repaired.</text>
</comment>
<comment type="similarity">
    <text evidence="1">Belongs to the SulA family.</text>
</comment>
<comment type="sequence caution" evidence="2">
    <conflict type="erroneous initiation">
        <sequence resource="EMBL-CDS" id="CAY74791"/>
    </conflict>
    <text>Extended N-terminus.</text>
</comment>
<evidence type="ECO:0000255" key="1">
    <source>
        <dbReference type="HAMAP-Rule" id="MF_01179"/>
    </source>
</evidence>
<evidence type="ECO:0000305" key="2"/>
<organism>
    <name type="scientific">Erwinia pyrifoliae (strain DSM 12163 / CIP 106111 / Ep16/96)</name>
    <dbReference type="NCBI Taxonomy" id="644651"/>
    <lineage>
        <taxon>Bacteria</taxon>
        <taxon>Pseudomonadati</taxon>
        <taxon>Pseudomonadota</taxon>
        <taxon>Gammaproteobacteria</taxon>
        <taxon>Enterobacterales</taxon>
        <taxon>Erwiniaceae</taxon>
        <taxon>Erwinia</taxon>
    </lineage>
</organism>
<protein>
    <recommendedName>
        <fullName evidence="1">Cell division inhibitor SulA</fullName>
    </recommendedName>
</protein>
<gene>
    <name evidence="1" type="primary">sulA</name>
    <name type="ordered locus">EPYR_02411</name>
</gene>
<sequence length="168" mass="18853">MRTHFMKNQSVKRNQHVSTPAIPASICADGLISELVHNEDHPGMTQLLLLPLLQQLGTQSRWQLWLTSQQKLSRDWLLRSGLPLDKVMQSPYCGTITTVEAMIKALQTGNYSVVLGWLADEISETERKRLQQAAKSGQALGLIMRSECNVLPSARPLHGLRIQSSLYH</sequence>
<reference key="1">
    <citation type="journal article" date="2010" name="BMC Genomics">
        <title>Complete genome sequence of the fire blight pathogen Erwinia pyrifoliae DSM 12163T and comparative genomic insights into plant pathogenicity.</title>
        <authorList>
            <person name="Smits T.H."/>
            <person name="Jaenicke S."/>
            <person name="Rezzonico F."/>
            <person name="Kamber T."/>
            <person name="Goesmann A."/>
            <person name="Frey J.E."/>
            <person name="Duffy B."/>
        </authorList>
    </citation>
    <scope>NUCLEOTIDE SEQUENCE [LARGE SCALE GENOMIC DNA]</scope>
    <source>
        <strain>DSM 12163 / CIP 106111 / Ep16/96</strain>
    </source>
</reference>
<keyword id="KW-0131">Cell cycle</keyword>
<keyword id="KW-0132">Cell division</keyword>
<keyword id="KW-0227">DNA damage</keyword>
<keyword id="KW-0717">Septation</keyword>
<keyword id="KW-0742">SOS response</keyword>